<accession>Q3ASP1</accession>
<dbReference type="EC" id="2.8.4.4" evidence="1"/>
<dbReference type="EMBL" id="CP000108">
    <property type="protein sequence ID" value="ABB27984.1"/>
    <property type="molecule type" value="Genomic_DNA"/>
</dbReference>
<dbReference type="SMR" id="Q3ASP1"/>
<dbReference type="STRING" id="340177.Cag_0713"/>
<dbReference type="KEGG" id="cch:Cag_0713"/>
<dbReference type="eggNOG" id="COG0621">
    <property type="taxonomic scope" value="Bacteria"/>
</dbReference>
<dbReference type="HOGENOM" id="CLU_018697_0_1_10"/>
<dbReference type="OrthoDB" id="9805215at2"/>
<dbReference type="GO" id="GO:0005829">
    <property type="term" value="C:cytosol"/>
    <property type="evidence" value="ECO:0007669"/>
    <property type="project" value="TreeGrafter"/>
</dbReference>
<dbReference type="GO" id="GO:0051539">
    <property type="term" value="F:4 iron, 4 sulfur cluster binding"/>
    <property type="evidence" value="ECO:0007669"/>
    <property type="project" value="UniProtKB-UniRule"/>
</dbReference>
<dbReference type="GO" id="GO:0035599">
    <property type="term" value="F:aspartic acid methylthiotransferase activity"/>
    <property type="evidence" value="ECO:0007669"/>
    <property type="project" value="TreeGrafter"/>
</dbReference>
<dbReference type="GO" id="GO:0046872">
    <property type="term" value="F:metal ion binding"/>
    <property type="evidence" value="ECO:0007669"/>
    <property type="project" value="UniProtKB-KW"/>
</dbReference>
<dbReference type="GO" id="GO:0103039">
    <property type="term" value="F:protein methylthiotransferase activity"/>
    <property type="evidence" value="ECO:0007669"/>
    <property type="project" value="UniProtKB-EC"/>
</dbReference>
<dbReference type="GO" id="GO:0006400">
    <property type="term" value="P:tRNA modification"/>
    <property type="evidence" value="ECO:0007669"/>
    <property type="project" value="InterPro"/>
</dbReference>
<dbReference type="CDD" id="cd01335">
    <property type="entry name" value="Radical_SAM"/>
    <property type="match status" value="1"/>
</dbReference>
<dbReference type="FunFam" id="3.80.30.20:FF:000001">
    <property type="entry name" value="tRNA-2-methylthio-N(6)-dimethylallyladenosine synthase 2"/>
    <property type="match status" value="1"/>
</dbReference>
<dbReference type="Gene3D" id="3.40.50.12160">
    <property type="entry name" value="Methylthiotransferase, N-terminal domain"/>
    <property type="match status" value="1"/>
</dbReference>
<dbReference type="Gene3D" id="2.40.50.140">
    <property type="entry name" value="Nucleic acid-binding proteins"/>
    <property type="match status" value="1"/>
</dbReference>
<dbReference type="Gene3D" id="3.80.30.20">
    <property type="entry name" value="tm_1862 like domain"/>
    <property type="match status" value="1"/>
</dbReference>
<dbReference type="HAMAP" id="MF_01865">
    <property type="entry name" value="MTTase_RimO"/>
    <property type="match status" value="1"/>
</dbReference>
<dbReference type="InterPro" id="IPR006638">
    <property type="entry name" value="Elp3/MiaA/NifB-like_rSAM"/>
</dbReference>
<dbReference type="InterPro" id="IPR005839">
    <property type="entry name" value="Methylthiotransferase"/>
</dbReference>
<dbReference type="InterPro" id="IPR020612">
    <property type="entry name" value="Methylthiotransferase_CS"/>
</dbReference>
<dbReference type="InterPro" id="IPR013848">
    <property type="entry name" value="Methylthiotransferase_N"/>
</dbReference>
<dbReference type="InterPro" id="IPR038135">
    <property type="entry name" value="Methylthiotransferase_N_sf"/>
</dbReference>
<dbReference type="InterPro" id="IPR012340">
    <property type="entry name" value="NA-bd_OB-fold"/>
</dbReference>
<dbReference type="InterPro" id="IPR005840">
    <property type="entry name" value="Ribosomal_uS12_MeSTrfase_RimO"/>
</dbReference>
<dbReference type="InterPro" id="IPR007197">
    <property type="entry name" value="rSAM"/>
</dbReference>
<dbReference type="InterPro" id="IPR023404">
    <property type="entry name" value="rSAM_horseshoe"/>
</dbReference>
<dbReference type="InterPro" id="IPR002792">
    <property type="entry name" value="TRAM_dom"/>
</dbReference>
<dbReference type="NCBIfam" id="TIGR01125">
    <property type="entry name" value="30S ribosomal protein S12 methylthiotransferase RimO"/>
    <property type="match status" value="1"/>
</dbReference>
<dbReference type="NCBIfam" id="TIGR00089">
    <property type="entry name" value="MiaB/RimO family radical SAM methylthiotransferase"/>
    <property type="match status" value="1"/>
</dbReference>
<dbReference type="PANTHER" id="PTHR43837">
    <property type="entry name" value="RIBOSOMAL PROTEIN S12 METHYLTHIOTRANSFERASE RIMO"/>
    <property type="match status" value="1"/>
</dbReference>
<dbReference type="PANTHER" id="PTHR43837:SF1">
    <property type="entry name" value="RIBOSOMAL PROTEIN US12 METHYLTHIOTRANSFERASE RIMO"/>
    <property type="match status" value="1"/>
</dbReference>
<dbReference type="Pfam" id="PF04055">
    <property type="entry name" value="Radical_SAM"/>
    <property type="match status" value="1"/>
</dbReference>
<dbReference type="Pfam" id="PF18693">
    <property type="entry name" value="TRAM_2"/>
    <property type="match status" value="1"/>
</dbReference>
<dbReference type="Pfam" id="PF00919">
    <property type="entry name" value="UPF0004"/>
    <property type="match status" value="1"/>
</dbReference>
<dbReference type="SFLD" id="SFLDG01082">
    <property type="entry name" value="B12-binding_domain_containing"/>
    <property type="match status" value="1"/>
</dbReference>
<dbReference type="SFLD" id="SFLDG01061">
    <property type="entry name" value="methylthiotransferase"/>
    <property type="match status" value="1"/>
</dbReference>
<dbReference type="SFLD" id="SFLDF00274">
    <property type="entry name" value="ribosomal_protein_S12_methylth"/>
    <property type="match status" value="1"/>
</dbReference>
<dbReference type="SMART" id="SM00729">
    <property type="entry name" value="Elp3"/>
    <property type="match status" value="1"/>
</dbReference>
<dbReference type="SUPFAM" id="SSF102114">
    <property type="entry name" value="Radical SAM enzymes"/>
    <property type="match status" value="1"/>
</dbReference>
<dbReference type="PROSITE" id="PS51449">
    <property type="entry name" value="MTTASE_N"/>
    <property type="match status" value="1"/>
</dbReference>
<dbReference type="PROSITE" id="PS01278">
    <property type="entry name" value="MTTASE_RADICAL"/>
    <property type="match status" value="1"/>
</dbReference>
<dbReference type="PROSITE" id="PS51918">
    <property type="entry name" value="RADICAL_SAM"/>
    <property type="match status" value="1"/>
</dbReference>
<reference key="1">
    <citation type="submission" date="2005-08" db="EMBL/GenBank/DDBJ databases">
        <title>Complete sequence of Chlorobium chlorochromatii CaD3.</title>
        <authorList>
            <consortium name="US DOE Joint Genome Institute"/>
            <person name="Copeland A."/>
            <person name="Lucas S."/>
            <person name="Lapidus A."/>
            <person name="Barry K."/>
            <person name="Detter J.C."/>
            <person name="Glavina T."/>
            <person name="Hammon N."/>
            <person name="Israni S."/>
            <person name="Pitluck S."/>
            <person name="Bryant D."/>
            <person name="Schmutz J."/>
            <person name="Larimer F."/>
            <person name="Land M."/>
            <person name="Kyrpides N."/>
            <person name="Ivanova N."/>
            <person name="Richardson P."/>
        </authorList>
    </citation>
    <scope>NUCLEOTIDE SEQUENCE [LARGE SCALE GENOMIC DNA]</scope>
    <source>
        <strain>CaD3</strain>
    </source>
</reference>
<evidence type="ECO:0000255" key="1">
    <source>
        <dbReference type="HAMAP-Rule" id="MF_01865"/>
    </source>
</evidence>
<evidence type="ECO:0000255" key="2">
    <source>
        <dbReference type="PROSITE-ProRule" id="PRU01266"/>
    </source>
</evidence>
<proteinExistence type="inferred from homology"/>
<sequence>MPTHSLFLLSLGCSKNTVDSERLLAQAAAAAIRSVERVDEADTILINTCAFIEDAKKESIEEMLAALDKKREGVVKQVFVMGCLPELYRRELQEELPEVDAFFGTRELPQILASLGARYRSELFDERLLLTPSHYAYLKISEGCNRICSFCSIPKIRGRYQSQPLEQLLREATRLQQQGVQELNLIAQDISLFGYDTTGHSQLNELLLRLSDMDFLWIRLLYAYPVNFPLEVIDTMRDRSNICNYLDIPLQHCNDRILRAMKRGVTKADTIRLLHEMRQRNPNIRLRTTMLVGFPGETRAEFEELLDFVEEQRFDRLGCFPYNHEEHAPSAMLEDLLSIEEKEERVSELMELQEAVAESLNREFEGKEIEVVVDSFVEEMAFCRSEYDAPEVDNECLLTFGAQNIQAGNFYRALINDSSAHELYGEIVQERSAGNSPQ</sequence>
<gene>
    <name evidence="1" type="primary">rimO</name>
    <name type="ordered locus">Cag_0713</name>
</gene>
<feature type="chain" id="PRO_0000374765" description="Ribosomal protein uS12 methylthiotransferase RimO">
    <location>
        <begin position="1"/>
        <end position="438"/>
    </location>
</feature>
<feature type="domain" description="MTTase N-terminal" evidence="1">
    <location>
        <begin position="4"/>
        <end position="120"/>
    </location>
</feature>
<feature type="domain" description="Radical SAM core" evidence="2">
    <location>
        <begin position="130"/>
        <end position="359"/>
    </location>
</feature>
<feature type="domain" description="TRAM" evidence="1">
    <location>
        <begin position="362"/>
        <end position="429"/>
    </location>
</feature>
<feature type="binding site" evidence="1">
    <location>
        <position position="13"/>
    </location>
    <ligand>
        <name>[4Fe-4S] cluster</name>
        <dbReference type="ChEBI" id="CHEBI:49883"/>
        <label>1</label>
    </ligand>
</feature>
<feature type="binding site" evidence="1">
    <location>
        <position position="49"/>
    </location>
    <ligand>
        <name>[4Fe-4S] cluster</name>
        <dbReference type="ChEBI" id="CHEBI:49883"/>
        <label>1</label>
    </ligand>
</feature>
<feature type="binding site" evidence="1">
    <location>
        <position position="83"/>
    </location>
    <ligand>
        <name>[4Fe-4S] cluster</name>
        <dbReference type="ChEBI" id="CHEBI:49883"/>
        <label>1</label>
    </ligand>
</feature>
<feature type="binding site" evidence="1">
    <location>
        <position position="144"/>
    </location>
    <ligand>
        <name>[4Fe-4S] cluster</name>
        <dbReference type="ChEBI" id="CHEBI:49883"/>
        <label>2</label>
        <note>4Fe-4S-S-AdoMet</note>
    </ligand>
</feature>
<feature type="binding site" evidence="1">
    <location>
        <position position="148"/>
    </location>
    <ligand>
        <name>[4Fe-4S] cluster</name>
        <dbReference type="ChEBI" id="CHEBI:49883"/>
        <label>2</label>
        <note>4Fe-4S-S-AdoMet</note>
    </ligand>
</feature>
<feature type="binding site" evidence="1">
    <location>
        <position position="151"/>
    </location>
    <ligand>
        <name>[4Fe-4S] cluster</name>
        <dbReference type="ChEBI" id="CHEBI:49883"/>
        <label>2</label>
        <note>4Fe-4S-S-AdoMet</note>
    </ligand>
</feature>
<organism>
    <name type="scientific">Chlorobium chlorochromatii (strain CaD3)</name>
    <dbReference type="NCBI Taxonomy" id="340177"/>
    <lineage>
        <taxon>Bacteria</taxon>
        <taxon>Pseudomonadati</taxon>
        <taxon>Chlorobiota</taxon>
        <taxon>Chlorobiia</taxon>
        <taxon>Chlorobiales</taxon>
        <taxon>Chlorobiaceae</taxon>
        <taxon>Chlorobium/Pelodictyon group</taxon>
        <taxon>Chlorobium</taxon>
    </lineage>
</organism>
<keyword id="KW-0004">4Fe-4S</keyword>
<keyword id="KW-0963">Cytoplasm</keyword>
<keyword id="KW-0408">Iron</keyword>
<keyword id="KW-0411">Iron-sulfur</keyword>
<keyword id="KW-0479">Metal-binding</keyword>
<keyword id="KW-0949">S-adenosyl-L-methionine</keyword>
<keyword id="KW-0808">Transferase</keyword>
<name>RIMO_CHLCH</name>
<comment type="function">
    <text evidence="1">Catalyzes the methylthiolation of an aspartic acid residue of ribosomal protein uS12.</text>
</comment>
<comment type="catalytic activity">
    <reaction evidence="1">
        <text>L-aspartate(89)-[ribosomal protein uS12]-hydrogen + (sulfur carrier)-SH + AH2 + 2 S-adenosyl-L-methionine = 3-methylsulfanyl-L-aspartate(89)-[ribosomal protein uS12]-hydrogen + (sulfur carrier)-H + 5'-deoxyadenosine + L-methionine + A + S-adenosyl-L-homocysteine + 2 H(+)</text>
        <dbReference type="Rhea" id="RHEA:37087"/>
        <dbReference type="Rhea" id="RHEA-COMP:10460"/>
        <dbReference type="Rhea" id="RHEA-COMP:10461"/>
        <dbReference type="Rhea" id="RHEA-COMP:14737"/>
        <dbReference type="Rhea" id="RHEA-COMP:14739"/>
        <dbReference type="ChEBI" id="CHEBI:13193"/>
        <dbReference type="ChEBI" id="CHEBI:15378"/>
        <dbReference type="ChEBI" id="CHEBI:17319"/>
        <dbReference type="ChEBI" id="CHEBI:17499"/>
        <dbReference type="ChEBI" id="CHEBI:29917"/>
        <dbReference type="ChEBI" id="CHEBI:29961"/>
        <dbReference type="ChEBI" id="CHEBI:57844"/>
        <dbReference type="ChEBI" id="CHEBI:57856"/>
        <dbReference type="ChEBI" id="CHEBI:59789"/>
        <dbReference type="ChEBI" id="CHEBI:64428"/>
        <dbReference type="ChEBI" id="CHEBI:73599"/>
        <dbReference type="EC" id="2.8.4.4"/>
    </reaction>
</comment>
<comment type="cofactor">
    <cofactor evidence="1">
        <name>[4Fe-4S] cluster</name>
        <dbReference type="ChEBI" id="CHEBI:49883"/>
    </cofactor>
    <text evidence="1">Binds 2 [4Fe-4S] clusters. One cluster is coordinated with 3 cysteines and an exchangeable S-adenosyl-L-methionine.</text>
</comment>
<comment type="subcellular location">
    <subcellularLocation>
        <location evidence="1">Cytoplasm</location>
    </subcellularLocation>
</comment>
<comment type="similarity">
    <text evidence="1">Belongs to the methylthiotransferase family. RimO subfamily.</text>
</comment>
<protein>
    <recommendedName>
        <fullName evidence="1">Ribosomal protein uS12 methylthiotransferase RimO</fullName>
        <shortName evidence="1">uS12 MTTase</shortName>
        <shortName evidence="1">uS12 methylthiotransferase</shortName>
        <ecNumber evidence="1">2.8.4.4</ecNumber>
    </recommendedName>
    <alternativeName>
        <fullName evidence="1">Ribosomal protein uS12 (aspartate-C(3))-methylthiotransferase</fullName>
    </alternativeName>
    <alternativeName>
        <fullName evidence="1">Ribosome maturation factor RimO</fullName>
    </alternativeName>
</protein>